<reference key="1">
    <citation type="journal article" date="2007" name="Science">
        <title>Legumes symbioses: absence of nod genes in photosynthetic bradyrhizobia.</title>
        <authorList>
            <person name="Giraud E."/>
            <person name="Moulin L."/>
            <person name="Vallenet D."/>
            <person name="Barbe V."/>
            <person name="Cytryn E."/>
            <person name="Avarre J.-C."/>
            <person name="Jaubert M."/>
            <person name="Simon D."/>
            <person name="Cartieaux F."/>
            <person name="Prin Y."/>
            <person name="Bena G."/>
            <person name="Hannibal L."/>
            <person name="Fardoux J."/>
            <person name="Kojadinovic M."/>
            <person name="Vuillet L."/>
            <person name="Lajus A."/>
            <person name="Cruveiller S."/>
            <person name="Rouy Z."/>
            <person name="Mangenot S."/>
            <person name="Segurens B."/>
            <person name="Dossat C."/>
            <person name="Franck W.L."/>
            <person name="Chang W.-S."/>
            <person name="Saunders E."/>
            <person name="Bruce D."/>
            <person name="Richardson P."/>
            <person name="Normand P."/>
            <person name="Dreyfus B."/>
            <person name="Pignol D."/>
            <person name="Stacey G."/>
            <person name="Emerich D."/>
            <person name="Vermeglio A."/>
            <person name="Medigue C."/>
            <person name="Sadowsky M."/>
        </authorList>
    </citation>
    <scope>NUCLEOTIDE SEQUENCE [LARGE SCALE GENOMIC DNA]</scope>
    <source>
        <strain>BTAi1 / ATCC BAA-1182</strain>
    </source>
</reference>
<name>RL14_BRASB</name>
<proteinExistence type="inferred from homology"/>
<organism>
    <name type="scientific">Bradyrhizobium sp. (strain BTAi1 / ATCC BAA-1182)</name>
    <dbReference type="NCBI Taxonomy" id="288000"/>
    <lineage>
        <taxon>Bacteria</taxon>
        <taxon>Pseudomonadati</taxon>
        <taxon>Pseudomonadota</taxon>
        <taxon>Alphaproteobacteria</taxon>
        <taxon>Hyphomicrobiales</taxon>
        <taxon>Nitrobacteraceae</taxon>
        <taxon>Bradyrhizobium</taxon>
    </lineage>
</organism>
<keyword id="KW-1185">Reference proteome</keyword>
<keyword id="KW-0687">Ribonucleoprotein</keyword>
<keyword id="KW-0689">Ribosomal protein</keyword>
<keyword id="KW-0694">RNA-binding</keyword>
<keyword id="KW-0699">rRNA-binding</keyword>
<protein>
    <recommendedName>
        <fullName evidence="1">Large ribosomal subunit protein uL14</fullName>
    </recommendedName>
    <alternativeName>
        <fullName evidence="2">50S ribosomal protein L14</fullName>
    </alternativeName>
</protein>
<dbReference type="EMBL" id="CP000494">
    <property type="protein sequence ID" value="ABQ37061.1"/>
    <property type="molecule type" value="Genomic_DNA"/>
</dbReference>
<dbReference type="RefSeq" id="WP_006611848.1">
    <property type="nucleotide sequence ID" value="NC_009485.1"/>
</dbReference>
<dbReference type="SMR" id="A5ELL7"/>
<dbReference type="STRING" id="288000.BBta_5060"/>
<dbReference type="KEGG" id="bbt:BBta_5060"/>
<dbReference type="eggNOG" id="COG0093">
    <property type="taxonomic scope" value="Bacteria"/>
</dbReference>
<dbReference type="HOGENOM" id="CLU_095071_2_1_5"/>
<dbReference type="OrthoDB" id="9806379at2"/>
<dbReference type="Proteomes" id="UP000000246">
    <property type="component" value="Chromosome"/>
</dbReference>
<dbReference type="GO" id="GO:0022625">
    <property type="term" value="C:cytosolic large ribosomal subunit"/>
    <property type="evidence" value="ECO:0007669"/>
    <property type="project" value="TreeGrafter"/>
</dbReference>
<dbReference type="GO" id="GO:0070180">
    <property type="term" value="F:large ribosomal subunit rRNA binding"/>
    <property type="evidence" value="ECO:0007669"/>
    <property type="project" value="TreeGrafter"/>
</dbReference>
<dbReference type="GO" id="GO:0003735">
    <property type="term" value="F:structural constituent of ribosome"/>
    <property type="evidence" value="ECO:0007669"/>
    <property type="project" value="InterPro"/>
</dbReference>
<dbReference type="GO" id="GO:0006412">
    <property type="term" value="P:translation"/>
    <property type="evidence" value="ECO:0007669"/>
    <property type="project" value="UniProtKB-UniRule"/>
</dbReference>
<dbReference type="CDD" id="cd00337">
    <property type="entry name" value="Ribosomal_uL14"/>
    <property type="match status" value="1"/>
</dbReference>
<dbReference type="FunFam" id="2.40.150.20:FF:000001">
    <property type="entry name" value="50S ribosomal protein L14"/>
    <property type="match status" value="1"/>
</dbReference>
<dbReference type="Gene3D" id="2.40.150.20">
    <property type="entry name" value="Ribosomal protein L14"/>
    <property type="match status" value="1"/>
</dbReference>
<dbReference type="HAMAP" id="MF_01367">
    <property type="entry name" value="Ribosomal_uL14"/>
    <property type="match status" value="1"/>
</dbReference>
<dbReference type="InterPro" id="IPR000218">
    <property type="entry name" value="Ribosomal_uL14"/>
</dbReference>
<dbReference type="InterPro" id="IPR005745">
    <property type="entry name" value="Ribosomal_uL14_bac-type"/>
</dbReference>
<dbReference type="InterPro" id="IPR019972">
    <property type="entry name" value="Ribosomal_uL14_CS"/>
</dbReference>
<dbReference type="InterPro" id="IPR036853">
    <property type="entry name" value="Ribosomal_uL14_sf"/>
</dbReference>
<dbReference type="NCBIfam" id="TIGR01067">
    <property type="entry name" value="rplN_bact"/>
    <property type="match status" value="1"/>
</dbReference>
<dbReference type="PANTHER" id="PTHR11761">
    <property type="entry name" value="50S/60S RIBOSOMAL PROTEIN L14/L23"/>
    <property type="match status" value="1"/>
</dbReference>
<dbReference type="PANTHER" id="PTHR11761:SF3">
    <property type="entry name" value="LARGE RIBOSOMAL SUBUNIT PROTEIN UL14M"/>
    <property type="match status" value="1"/>
</dbReference>
<dbReference type="Pfam" id="PF00238">
    <property type="entry name" value="Ribosomal_L14"/>
    <property type="match status" value="1"/>
</dbReference>
<dbReference type="SMART" id="SM01374">
    <property type="entry name" value="Ribosomal_L14"/>
    <property type="match status" value="1"/>
</dbReference>
<dbReference type="SUPFAM" id="SSF50193">
    <property type="entry name" value="Ribosomal protein L14"/>
    <property type="match status" value="1"/>
</dbReference>
<dbReference type="PROSITE" id="PS00049">
    <property type="entry name" value="RIBOSOMAL_L14"/>
    <property type="match status" value="1"/>
</dbReference>
<gene>
    <name evidence="1" type="primary">rplN</name>
    <name type="ordered locus">BBta_5060</name>
</gene>
<feature type="chain" id="PRO_1000055528" description="Large ribosomal subunit protein uL14">
    <location>
        <begin position="1"/>
        <end position="122"/>
    </location>
</feature>
<sequence>MIQMQTNLDVADNSGARRVMCIKVLGGSKRRYATVGDIIVVSIKEAIPRGKVKKGDVMKAVVVRVRKDIRRADGSVIRFDRNAAVLINNQSEPVGTRIFGPVPRELRAKNHMKIISLAPEVL</sequence>
<accession>A5ELL7</accession>
<evidence type="ECO:0000255" key="1">
    <source>
        <dbReference type="HAMAP-Rule" id="MF_01367"/>
    </source>
</evidence>
<evidence type="ECO:0000305" key="2"/>
<comment type="function">
    <text evidence="1">Binds to 23S rRNA. Forms part of two intersubunit bridges in the 70S ribosome.</text>
</comment>
<comment type="subunit">
    <text evidence="1">Part of the 50S ribosomal subunit. Forms a cluster with proteins L3 and L19. In the 70S ribosome, L14 and L19 interact and together make contacts with the 16S rRNA in bridges B5 and B8.</text>
</comment>
<comment type="similarity">
    <text evidence="1">Belongs to the universal ribosomal protein uL14 family.</text>
</comment>